<feature type="chain" id="PRO_1000016991" description="Ribose-5-phosphate isomerase A">
    <location>
        <begin position="1"/>
        <end position="219"/>
    </location>
</feature>
<feature type="active site" description="Proton acceptor" evidence="1">
    <location>
        <position position="103"/>
    </location>
</feature>
<feature type="binding site" evidence="1">
    <location>
        <begin position="28"/>
        <end position="31"/>
    </location>
    <ligand>
        <name>substrate</name>
    </ligand>
</feature>
<feature type="binding site" evidence="1">
    <location>
        <begin position="81"/>
        <end position="84"/>
    </location>
    <ligand>
        <name>substrate</name>
    </ligand>
</feature>
<feature type="binding site" evidence="1">
    <location>
        <begin position="94"/>
        <end position="97"/>
    </location>
    <ligand>
        <name>substrate</name>
    </ligand>
</feature>
<feature type="binding site" evidence="1">
    <location>
        <position position="121"/>
    </location>
    <ligand>
        <name>substrate</name>
    </ligand>
</feature>
<keyword id="KW-0413">Isomerase</keyword>
<keyword id="KW-1185">Reference proteome</keyword>
<accession>A3QB49</accession>
<gene>
    <name evidence="1" type="primary">rpiA</name>
    <name type="ordered locus">Shew_0825</name>
</gene>
<name>RPIA_SHELP</name>
<evidence type="ECO:0000255" key="1">
    <source>
        <dbReference type="HAMAP-Rule" id="MF_00170"/>
    </source>
</evidence>
<sequence length="219" mass="23328">MTQDEMKKAAGWAALEYVEKDSIVGVGTGSTVNHFIDALATMKADIEGAVSSSEASTEKMKALGIPVFDLNSVDQLSVYVDGADEINGHMDMIKGGGAALTREKIVAAVADKFVCIVDNTKEVEVLGEFPLPVEVIPMARSYVARELVKLGGDPVYREGVVTDNGNVILDVYNMKIFNPKALEEQINQIVGVVTNGLFANRGADVLLVGTPEGVKTVKP</sequence>
<organism>
    <name type="scientific">Shewanella loihica (strain ATCC BAA-1088 / PV-4)</name>
    <dbReference type="NCBI Taxonomy" id="323850"/>
    <lineage>
        <taxon>Bacteria</taxon>
        <taxon>Pseudomonadati</taxon>
        <taxon>Pseudomonadota</taxon>
        <taxon>Gammaproteobacteria</taxon>
        <taxon>Alteromonadales</taxon>
        <taxon>Shewanellaceae</taxon>
        <taxon>Shewanella</taxon>
    </lineage>
</organism>
<protein>
    <recommendedName>
        <fullName evidence="1">Ribose-5-phosphate isomerase A</fullName>
        <ecNumber evidence="1">5.3.1.6</ecNumber>
    </recommendedName>
    <alternativeName>
        <fullName evidence="1">Phosphoriboisomerase A</fullName>
        <shortName evidence="1">PRI</shortName>
    </alternativeName>
</protein>
<reference key="1">
    <citation type="submission" date="2007-03" db="EMBL/GenBank/DDBJ databases">
        <title>Complete sequence of Shewanella loihica PV-4.</title>
        <authorList>
            <consortium name="US DOE Joint Genome Institute"/>
            <person name="Copeland A."/>
            <person name="Lucas S."/>
            <person name="Lapidus A."/>
            <person name="Barry K."/>
            <person name="Detter J.C."/>
            <person name="Glavina del Rio T."/>
            <person name="Hammon N."/>
            <person name="Israni S."/>
            <person name="Dalin E."/>
            <person name="Tice H."/>
            <person name="Pitluck S."/>
            <person name="Chain P."/>
            <person name="Malfatti S."/>
            <person name="Shin M."/>
            <person name="Vergez L."/>
            <person name="Schmutz J."/>
            <person name="Larimer F."/>
            <person name="Land M."/>
            <person name="Hauser L."/>
            <person name="Kyrpides N."/>
            <person name="Mikhailova N."/>
            <person name="Romine M.F."/>
            <person name="Serres G."/>
            <person name="Fredrickson J."/>
            <person name="Tiedje J."/>
            <person name="Richardson P."/>
        </authorList>
    </citation>
    <scope>NUCLEOTIDE SEQUENCE [LARGE SCALE GENOMIC DNA]</scope>
    <source>
        <strain>ATCC BAA-1088 / PV-4</strain>
    </source>
</reference>
<dbReference type="EC" id="5.3.1.6" evidence="1"/>
<dbReference type="EMBL" id="CP000606">
    <property type="protein sequence ID" value="ABO22697.1"/>
    <property type="molecule type" value="Genomic_DNA"/>
</dbReference>
<dbReference type="RefSeq" id="WP_011864631.1">
    <property type="nucleotide sequence ID" value="NC_009092.1"/>
</dbReference>
<dbReference type="SMR" id="A3QB49"/>
<dbReference type="STRING" id="323850.Shew_0825"/>
<dbReference type="KEGG" id="slo:Shew_0825"/>
<dbReference type="eggNOG" id="COG0120">
    <property type="taxonomic scope" value="Bacteria"/>
</dbReference>
<dbReference type="HOGENOM" id="CLU_056590_1_1_6"/>
<dbReference type="OrthoDB" id="5870696at2"/>
<dbReference type="UniPathway" id="UPA00115">
    <property type="reaction ID" value="UER00412"/>
</dbReference>
<dbReference type="Proteomes" id="UP000001558">
    <property type="component" value="Chromosome"/>
</dbReference>
<dbReference type="GO" id="GO:0005829">
    <property type="term" value="C:cytosol"/>
    <property type="evidence" value="ECO:0007669"/>
    <property type="project" value="TreeGrafter"/>
</dbReference>
<dbReference type="GO" id="GO:0004751">
    <property type="term" value="F:ribose-5-phosphate isomerase activity"/>
    <property type="evidence" value="ECO:0007669"/>
    <property type="project" value="UniProtKB-UniRule"/>
</dbReference>
<dbReference type="GO" id="GO:0006014">
    <property type="term" value="P:D-ribose metabolic process"/>
    <property type="evidence" value="ECO:0007669"/>
    <property type="project" value="TreeGrafter"/>
</dbReference>
<dbReference type="GO" id="GO:0009052">
    <property type="term" value="P:pentose-phosphate shunt, non-oxidative branch"/>
    <property type="evidence" value="ECO:0007669"/>
    <property type="project" value="UniProtKB-UniRule"/>
</dbReference>
<dbReference type="CDD" id="cd01398">
    <property type="entry name" value="RPI_A"/>
    <property type="match status" value="1"/>
</dbReference>
<dbReference type="FunFam" id="3.30.70.260:FF:000004">
    <property type="entry name" value="Ribose-5-phosphate isomerase A"/>
    <property type="match status" value="1"/>
</dbReference>
<dbReference type="FunFam" id="3.40.50.1360:FF:000001">
    <property type="entry name" value="Ribose-5-phosphate isomerase A"/>
    <property type="match status" value="1"/>
</dbReference>
<dbReference type="Gene3D" id="3.30.70.260">
    <property type="match status" value="1"/>
</dbReference>
<dbReference type="Gene3D" id="3.40.50.1360">
    <property type="match status" value="1"/>
</dbReference>
<dbReference type="HAMAP" id="MF_00170">
    <property type="entry name" value="Rib_5P_isom_A"/>
    <property type="match status" value="1"/>
</dbReference>
<dbReference type="InterPro" id="IPR037171">
    <property type="entry name" value="NagB/RpiA_transferase-like"/>
</dbReference>
<dbReference type="InterPro" id="IPR020672">
    <property type="entry name" value="Ribose5P_isomerase_typA_subgr"/>
</dbReference>
<dbReference type="InterPro" id="IPR004788">
    <property type="entry name" value="Ribose5P_isomerase_type_A"/>
</dbReference>
<dbReference type="NCBIfam" id="NF001924">
    <property type="entry name" value="PRK00702.1"/>
    <property type="match status" value="1"/>
</dbReference>
<dbReference type="NCBIfam" id="TIGR00021">
    <property type="entry name" value="rpiA"/>
    <property type="match status" value="1"/>
</dbReference>
<dbReference type="PANTHER" id="PTHR11934">
    <property type="entry name" value="RIBOSE-5-PHOSPHATE ISOMERASE"/>
    <property type="match status" value="1"/>
</dbReference>
<dbReference type="PANTHER" id="PTHR11934:SF0">
    <property type="entry name" value="RIBOSE-5-PHOSPHATE ISOMERASE"/>
    <property type="match status" value="1"/>
</dbReference>
<dbReference type="Pfam" id="PF06026">
    <property type="entry name" value="Rib_5-P_isom_A"/>
    <property type="match status" value="1"/>
</dbReference>
<dbReference type="SUPFAM" id="SSF75445">
    <property type="entry name" value="D-ribose-5-phosphate isomerase (RpiA), lid domain"/>
    <property type="match status" value="1"/>
</dbReference>
<dbReference type="SUPFAM" id="SSF100950">
    <property type="entry name" value="NagB/RpiA/CoA transferase-like"/>
    <property type="match status" value="1"/>
</dbReference>
<proteinExistence type="inferred from homology"/>
<comment type="function">
    <text evidence="1">Catalyzes the reversible conversion of ribose-5-phosphate to ribulose 5-phosphate.</text>
</comment>
<comment type="catalytic activity">
    <reaction evidence="1">
        <text>aldehydo-D-ribose 5-phosphate = D-ribulose 5-phosphate</text>
        <dbReference type="Rhea" id="RHEA:14657"/>
        <dbReference type="ChEBI" id="CHEBI:58121"/>
        <dbReference type="ChEBI" id="CHEBI:58273"/>
        <dbReference type="EC" id="5.3.1.6"/>
    </reaction>
</comment>
<comment type="pathway">
    <text evidence="1">Carbohydrate degradation; pentose phosphate pathway; D-ribose 5-phosphate from D-ribulose 5-phosphate (non-oxidative stage): step 1/1.</text>
</comment>
<comment type="subunit">
    <text evidence="1">Homodimer.</text>
</comment>
<comment type="similarity">
    <text evidence="1">Belongs to the ribose 5-phosphate isomerase family.</text>
</comment>